<dbReference type="EMBL" id="D83492">
    <property type="protein sequence ID" value="BAA21560.1"/>
    <property type="status" value="ALT_INIT"/>
    <property type="molecule type" value="mRNA"/>
</dbReference>
<dbReference type="EMBL" id="AY280502">
    <property type="protein sequence ID" value="AAP20939.1"/>
    <property type="status" value="ALT_INIT"/>
    <property type="molecule type" value="Genomic_DNA"/>
</dbReference>
<dbReference type="EMBL" id="AF107256">
    <property type="protein sequence ID" value="AAD03058.1"/>
    <property type="status" value="ALT_INIT"/>
    <property type="molecule type" value="Genomic_DNA"/>
</dbReference>
<dbReference type="EMBL" id="AC104597">
    <property type="status" value="NOT_ANNOTATED_CDS"/>
    <property type="molecule type" value="Genomic_DNA"/>
</dbReference>
<dbReference type="EMBL" id="CH236959">
    <property type="protein sequence ID" value="EAL23775.1"/>
    <property type="status" value="ALT_SEQ"/>
    <property type="molecule type" value="Genomic_DNA"/>
</dbReference>
<dbReference type="EMBL" id="CH471198">
    <property type="protein sequence ID" value="EAW51900.1"/>
    <property type="molecule type" value="Genomic_DNA"/>
</dbReference>
<dbReference type="EMBL" id="CH471198">
    <property type="protein sequence ID" value="EAW51901.1"/>
    <property type="molecule type" value="Genomic_DNA"/>
</dbReference>
<dbReference type="EMBL" id="CH471198">
    <property type="protein sequence ID" value="EAW51902.1"/>
    <property type="status" value="ALT_SEQ"/>
    <property type="molecule type" value="Genomic_DNA"/>
</dbReference>
<dbReference type="EMBL" id="CH471198">
    <property type="protein sequence ID" value="EAW51903.1"/>
    <property type="molecule type" value="Genomic_DNA"/>
</dbReference>
<dbReference type="EMBL" id="BC051028">
    <property type="status" value="NOT_ANNOTATED_CDS"/>
    <property type="molecule type" value="mRNA"/>
</dbReference>
<dbReference type="EMBL" id="BC110606">
    <property type="protein sequence ID" value="AAI10607.1"/>
    <property type="molecule type" value="mRNA"/>
</dbReference>
<dbReference type="EMBL" id="BC110607">
    <property type="protein sequence ID" value="AAI10608.2"/>
    <property type="status" value="ALT_INIT"/>
    <property type="molecule type" value="mRNA"/>
</dbReference>
<dbReference type="EMBL" id="EU054308">
    <property type="protein sequence ID" value="ABV55388.1"/>
    <property type="molecule type" value="mRNA"/>
</dbReference>
<dbReference type="PIR" id="JC5526">
    <property type="entry name" value="JC5526"/>
</dbReference>
<dbReference type="RefSeq" id="NP_001267724.2">
    <property type="nucleotide sequence ID" value="NM_001280795.2"/>
</dbReference>
<dbReference type="RefSeq" id="NP_004436.4">
    <property type="nucleotide sequence ID" value="NM_004445.5"/>
</dbReference>
<dbReference type="RefSeq" id="XP_054213437.1">
    <molecule id="O15197-1"/>
    <property type="nucleotide sequence ID" value="XM_054357462.1"/>
</dbReference>
<dbReference type="RefSeq" id="XP_054213438.1">
    <molecule id="O15197-1"/>
    <property type="nucleotide sequence ID" value="XM_054357463.1"/>
</dbReference>
<dbReference type="RefSeq" id="XP_054213439.1">
    <molecule id="O15197-1"/>
    <property type="nucleotide sequence ID" value="XM_054357464.1"/>
</dbReference>
<dbReference type="PDB" id="7K7J">
    <property type="method" value="X-ray"/>
    <property type="resolution" value="3.00 A"/>
    <property type="chains" value="A=33-578"/>
</dbReference>
<dbReference type="PDBsum" id="7K7J"/>
<dbReference type="SMR" id="O15197"/>
<dbReference type="BioGRID" id="108365">
    <property type="interactions" value="92"/>
</dbReference>
<dbReference type="FunCoup" id="O15197">
    <property type="interactions" value="187"/>
</dbReference>
<dbReference type="IntAct" id="O15197">
    <property type="interactions" value="76"/>
</dbReference>
<dbReference type="MINT" id="O15197"/>
<dbReference type="STRING" id="9606.ENSP00000481994"/>
<dbReference type="BindingDB" id="O15197"/>
<dbReference type="ChEMBL" id="CHEMBL5836"/>
<dbReference type="DrugBank" id="DB12010">
    <property type="generic name" value="Fostamatinib"/>
</dbReference>
<dbReference type="DrugCentral" id="O15197"/>
<dbReference type="GlyCosmos" id="O15197">
    <property type="glycosylation" value="1 site, No reported glycans"/>
</dbReference>
<dbReference type="GlyGen" id="O15197">
    <property type="glycosylation" value="1 site"/>
</dbReference>
<dbReference type="iPTMnet" id="O15197"/>
<dbReference type="PhosphoSitePlus" id="O15197"/>
<dbReference type="BioMuta" id="EPHB6"/>
<dbReference type="CPTAC" id="CPTAC-3088"/>
<dbReference type="jPOST" id="O15197"/>
<dbReference type="MassIVE" id="O15197"/>
<dbReference type="PaxDb" id="9606-ENSP00000481994"/>
<dbReference type="PeptideAtlas" id="O15197"/>
<dbReference type="ProteomicsDB" id="48502">
    <molecule id="O15197-1"/>
</dbReference>
<dbReference type="ProteomicsDB" id="48503">
    <molecule id="O15197-2"/>
</dbReference>
<dbReference type="ProteomicsDB" id="48504">
    <molecule id="O15197-3"/>
</dbReference>
<dbReference type="ABCD" id="O15197">
    <property type="antibodies" value="7 sequenced antibodies"/>
</dbReference>
<dbReference type="DNASU" id="2051"/>
<dbReference type="GeneID" id="2051"/>
<dbReference type="KEGG" id="hsa:2051"/>
<dbReference type="AGR" id="HGNC:3396"/>
<dbReference type="CTD" id="2051"/>
<dbReference type="DisGeNET" id="2051"/>
<dbReference type="GeneCards" id="EPHB6"/>
<dbReference type="HGNC" id="HGNC:3396">
    <property type="gene designation" value="EPHB6"/>
</dbReference>
<dbReference type="MIM" id="602757">
    <property type="type" value="gene"/>
</dbReference>
<dbReference type="neXtProt" id="NX_O15197"/>
<dbReference type="PharmGKB" id="PA27828"/>
<dbReference type="eggNOG" id="KOG0196">
    <property type="taxonomic scope" value="Eukaryota"/>
</dbReference>
<dbReference type="InParanoid" id="O15197"/>
<dbReference type="OrthoDB" id="9826029at2759"/>
<dbReference type="PAN-GO" id="O15197">
    <property type="GO annotations" value="9 GO annotations based on evolutionary models"/>
</dbReference>
<dbReference type="PhylomeDB" id="O15197"/>
<dbReference type="TreeFam" id="TF314013"/>
<dbReference type="PathwayCommons" id="O15197"/>
<dbReference type="Reactome" id="R-HSA-2682334">
    <property type="pathway name" value="EPH-Ephrin signaling"/>
</dbReference>
<dbReference type="Reactome" id="R-HSA-3928662">
    <property type="pathway name" value="EPHB-mediated forward signaling"/>
</dbReference>
<dbReference type="Reactome" id="R-HSA-3928664">
    <property type="pathway name" value="Ephrin signaling"/>
</dbReference>
<dbReference type="Reactome" id="R-HSA-3928665">
    <property type="pathway name" value="EPH-ephrin mediated repulsion of cells"/>
</dbReference>
<dbReference type="SignaLink" id="O15197"/>
<dbReference type="SIGNOR" id="O15197"/>
<dbReference type="BioGRID-ORCS" id="2051">
    <property type="hits" value="8 hits in 1079 CRISPR screens"/>
</dbReference>
<dbReference type="ChiTaRS" id="EPHB6">
    <property type="organism name" value="human"/>
</dbReference>
<dbReference type="GeneWiki" id="EPHB6"/>
<dbReference type="GenomeRNAi" id="2051"/>
<dbReference type="Pharos" id="O15197">
    <property type="development level" value="Tchem"/>
</dbReference>
<dbReference type="PRO" id="PR:O15197"/>
<dbReference type="Proteomes" id="UP000005640">
    <property type="component" value="Unplaced"/>
</dbReference>
<dbReference type="RNAct" id="O15197">
    <property type="molecule type" value="protein"/>
</dbReference>
<dbReference type="GO" id="GO:0005829">
    <property type="term" value="C:cytosol"/>
    <property type="evidence" value="ECO:0000304"/>
    <property type="project" value="Reactome"/>
</dbReference>
<dbReference type="GO" id="GO:0030425">
    <property type="term" value="C:dendrite"/>
    <property type="evidence" value="ECO:0000318"/>
    <property type="project" value="GO_Central"/>
</dbReference>
<dbReference type="GO" id="GO:0005576">
    <property type="term" value="C:extracellular region"/>
    <property type="evidence" value="ECO:0000304"/>
    <property type="project" value="Reactome"/>
</dbReference>
<dbReference type="GO" id="GO:0005886">
    <property type="term" value="C:plasma membrane"/>
    <property type="evidence" value="ECO:0000318"/>
    <property type="project" value="GO_Central"/>
</dbReference>
<dbReference type="GO" id="GO:0005524">
    <property type="term" value="F:ATP binding"/>
    <property type="evidence" value="ECO:0007669"/>
    <property type="project" value="UniProtKB-KW"/>
</dbReference>
<dbReference type="GO" id="GO:0005003">
    <property type="term" value="F:ephrin receptor activity"/>
    <property type="evidence" value="ECO:0000304"/>
    <property type="project" value="ProtInc"/>
</dbReference>
<dbReference type="GO" id="GO:0038023">
    <property type="term" value="F:signaling receptor activity"/>
    <property type="evidence" value="ECO:0000304"/>
    <property type="project" value="ProtInc"/>
</dbReference>
<dbReference type="GO" id="GO:0005005">
    <property type="term" value="F:transmembrane-ephrin receptor activity"/>
    <property type="evidence" value="ECO:0000318"/>
    <property type="project" value="GO_Central"/>
</dbReference>
<dbReference type="GO" id="GO:0007411">
    <property type="term" value="P:axon guidance"/>
    <property type="evidence" value="ECO:0000318"/>
    <property type="project" value="GO_Central"/>
</dbReference>
<dbReference type="GO" id="GO:0048013">
    <property type="term" value="P:ephrin receptor signaling pathway"/>
    <property type="evidence" value="ECO:0000318"/>
    <property type="project" value="GO_Central"/>
</dbReference>
<dbReference type="CDD" id="cd10475">
    <property type="entry name" value="EphR_LBD_B6"/>
    <property type="match status" value="1"/>
</dbReference>
<dbReference type="CDD" id="cd00063">
    <property type="entry name" value="FN3"/>
    <property type="match status" value="2"/>
</dbReference>
<dbReference type="CDD" id="cd09555">
    <property type="entry name" value="SAM_EPH-B6"/>
    <property type="match status" value="1"/>
</dbReference>
<dbReference type="FunFam" id="2.10.50.10:FF:000001">
    <property type="entry name" value="Ephrin type-A receptor 5"/>
    <property type="match status" value="1"/>
</dbReference>
<dbReference type="FunFam" id="2.60.40.10:FF:000059">
    <property type="entry name" value="Ephrin type-A receptor 6"/>
    <property type="match status" value="1"/>
</dbReference>
<dbReference type="FunFam" id="1.10.150.50:FF:000068">
    <property type="entry name" value="Ephrin type-B receptor 6"/>
    <property type="match status" value="1"/>
</dbReference>
<dbReference type="FunFam" id="1.10.510.10:FF:000470">
    <property type="entry name" value="Ephrin type-B receptor 6"/>
    <property type="match status" value="1"/>
</dbReference>
<dbReference type="FunFam" id="2.60.120.260:FF:000064">
    <property type="entry name" value="Ephrin type-B receptor 6"/>
    <property type="match status" value="1"/>
</dbReference>
<dbReference type="FunFam" id="3.30.200.20:FF:000143">
    <property type="entry name" value="Ephrin type-B receptor 6"/>
    <property type="match status" value="1"/>
</dbReference>
<dbReference type="FunFam" id="2.60.40.10:FF:000508">
    <property type="entry name" value="ephrin type-B receptor 6"/>
    <property type="match status" value="1"/>
</dbReference>
<dbReference type="FunFam" id="2.60.40.1770:FF:000004">
    <property type="entry name" value="ephrin type-B receptor 6"/>
    <property type="match status" value="1"/>
</dbReference>
<dbReference type="Gene3D" id="2.60.40.1770">
    <property type="entry name" value="ephrin a2 ectodomain"/>
    <property type="match status" value="1"/>
</dbReference>
<dbReference type="Gene3D" id="2.60.120.260">
    <property type="entry name" value="Galactose-binding domain-like"/>
    <property type="match status" value="1"/>
</dbReference>
<dbReference type="Gene3D" id="2.60.40.10">
    <property type="entry name" value="Immunoglobulins"/>
    <property type="match status" value="2"/>
</dbReference>
<dbReference type="Gene3D" id="3.30.200.20">
    <property type="entry name" value="Phosphorylase Kinase, domain 1"/>
    <property type="match status" value="1"/>
</dbReference>
<dbReference type="Gene3D" id="1.10.150.50">
    <property type="entry name" value="Transcription Factor, Ets-1"/>
    <property type="match status" value="1"/>
</dbReference>
<dbReference type="Gene3D" id="1.10.510.10">
    <property type="entry name" value="Transferase(Phosphotransferase) domain 1"/>
    <property type="match status" value="1"/>
</dbReference>
<dbReference type="Gene3D" id="2.10.50.10">
    <property type="entry name" value="Tumor Necrosis Factor Receptor, subunit A, domain 2"/>
    <property type="match status" value="1"/>
</dbReference>
<dbReference type="InterPro" id="IPR027936">
    <property type="entry name" value="Eph_TM"/>
</dbReference>
<dbReference type="InterPro" id="IPR001090">
    <property type="entry name" value="Ephrin_rcpt_lig-bd_dom"/>
</dbReference>
<dbReference type="InterPro" id="IPR050449">
    <property type="entry name" value="Ephrin_rcpt_TKs"/>
</dbReference>
<dbReference type="InterPro" id="IPR003961">
    <property type="entry name" value="FN3_dom"/>
</dbReference>
<dbReference type="InterPro" id="IPR036116">
    <property type="entry name" value="FN3_sf"/>
</dbReference>
<dbReference type="InterPro" id="IPR008979">
    <property type="entry name" value="Galactose-bd-like_sf"/>
</dbReference>
<dbReference type="InterPro" id="IPR009030">
    <property type="entry name" value="Growth_fac_rcpt_cys_sf"/>
</dbReference>
<dbReference type="InterPro" id="IPR013783">
    <property type="entry name" value="Ig-like_fold"/>
</dbReference>
<dbReference type="InterPro" id="IPR011009">
    <property type="entry name" value="Kinase-like_dom_sf"/>
</dbReference>
<dbReference type="InterPro" id="IPR000719">
    <property type="entry name" value="Prot_kinase_dom"/>
</dbReference>
<dbReference type="InterPro" id="IPR001660">
    <property type="entry name" value="SAM"/>
</dbReference>
<dbReference type="InterPro" id="IPR013761">
    <property type="entry name" value="SAM/pointed_sf"/>
</dbReference>
<dbReference type="InterPro" id="IPR001245">
    <property type="entry name" value="Ser-Thr/Tyr_kinase_cat_dom"/>
</dbReference>
<dbReference type="InterPro" id="IPR011641">
    <property type="entry name" value="Tyr-kin_ephrin_A/B_rcpt-like"/>
</dbReference>
<dbReference type="InterPro" id="IPR016257">
    <property type="entry name" value="Tyr_kinase_ephrin_rcpt"/>
</dbReference>
<dbReference type="InterPro" id="IPR001426">
    <property type="entry name" value="Tyr_kinase_rcpt_V_CS"/>
</dbReference>
<dbReference type="PANTHER" id="PTHR46877">
    <property type="entry name" value="EPH RECEPTOR A5"/>
    <property type="match status" value="1"/>
</dbReference>
<dbReference type="PANTHER" id="PTHR46877:SF15">
    <property type="entry name" value="EPHRIN TYPE-B RECEPTOR 6"/>
    <property type="match status" value="1"/>
</dbReference>
<dbReference type="Pfam" id="PF14575">
    <property type="entry name" value="EphA2_TM"/>
    <property type="match status" value="1"/>
</dbReference>
<dbReference type="Pfam" id="PF01404">
    <property type="entry name" value="Ephrin_lbd"/>
    <property type="match status" value="1"/>
</dbReference>
<dbReference type="Pfam" id="PF07699">
    <property type="entry name" value="Ephrin_rec_like"/>
    <property type="match status" value="1"/>
</dbReference>
<dbReference type="Pfam" id="PF00041">
    <property type="entry name" value="fn3"/>
    <property type="match status" value="1"/>
</dbReference>
<dbReference type="Pfam" id="PF07714">
    <property type="entry name" value="PK_Tyr_Ser-Thr"/>
    <property type="match status" value="1"/>
</dbReference>
<dbReference type="Pfam" id="PF07647">
    <property type="entry name" value="SAM_2"/>
    <property type="match status" value="1"/>
</dbReference>
<dbReference type="PIRSF" id="PIRSF000666">
    <property type="entry name" value="TyrPK_ephrin_receptor"/>
    <property type="match status" value="1"/>
</dbReference>
<dbReference type="PRINTS" id="PR00014">
    <property type="entry name" value="FNTYPEIII"/>
</dbReference>
<dbReference type="PRINTS" id="PR00109">
    <property type="entry name" value="TYRKINASE"/>
</dbReference>
<dbReference type="SMART" id="SM00615">
    <property type="entry name" value="EPH_lbd"/>
    <property type="match status" value="1"/>
</dbReference>
<dbReference type="SMART" id="SM01411">
    <property type="entry name" value="Ephrin_rec_like"/>
    <property type="match status" value="1"/>
</dbReference>
<dbReference type="SMART" id="SM00060">
    <property type="entry name" value="FN3"/>
    <property type="match status" value="2"/>
</dbReference>
<dbReference type="SMART" id="SM00454">
    <property type="entry name" value="SAM"/>
    <property type="match status" value="1"/>
</dbReference>
<dbReference type="SUPFAM" id="SSF49265">
    <property type="entry name" value="Fibronectin type III"/>
    <property type="match status" value="1"/>
</dbReference>
<dbReference type="SUPFAM" id="SSF49785">
    <property type="entry name" value="Galactose-binding domain-like"/>
    <property type="match status" value="1"/>
</dbReference>
<dbReference type="SUPFAM" id="SSF57184">
    <property type="entry name" value="Growth factor receptor domain"/>
    <property type="match status" value="1"/>
</dbReference>
<dbReference type="SUPFAM" id="SSF56112">
    <property type="entry name" value="Protein kinase-like (PK-like)"/>
    <property type="match status" value="1"/>
</dbReference>
<dbReference type="SUPFAM" id="SSF47769">
    <property type="entry name" value="SAM/Pointed domain"/>
    <property type="match status" value="1"/>
</dbReference>
<dbReference type="PROSITE" id="PS51550">
    <property type="entry name" value="EPH_LBD"/>
    <property type="match status" value="1"/>
</dbReference>
<dbReference type="PROSITE" id="PS50853">
    <property type="entry name" value="FN3"/>
    <property type="match status" value="2"/>
</dbReference>
<dbReference type="PROSITE" id="PS50011">
    <property type="entry name" value="PROTEIN_KINASE_DOM"/>
    <property type="match status" value="1"/>
</dbReference>
<dbReference type="PROSITE" id="PS00790">
    <property type="entry name" value="RECEPTOR_TYR_KIN_V_1"/>
    <property type="match status" value="1"/>
</dbReference>
<dbReference type="PROSITE" id="PS00791">
    <property type="entry name" value="RECEPTOR_TYR_KIN_V_2"/>
    <property type="match status" value="1"/>
</dbReference>
<dbReference type="PROSITE" id="PS50105">
    <property type="entry name" value="SAM_DOMAIN"/>
    <property type="match status" value="1"/>
</dbReference>
<accession>O15197</accession>
<accession>A4D2I7</accession>
<accession>A8CDT5</accession>
<accession>D3DXD3</accession>
<accession>Q2TB23</accession>
<accession>Q2TB24</accession>
<keyword id="KW-0002">3D-structure</keyword>
<keyword id="KW-0025">Alternative splicing</keyword>
<keyword id="KW-0067">ATP-binding</keyword>
<keyword id="KW-0903">Direct protein sequencing</keyword>
<keyword id="KW-0325">Glycoprotein</keyword>
<keyword id="KW-0472">Membrane</keyword>
<keyword id="KW-0547">Nucleotide-binding</keyword>
<keyword id="KW-1267">Proteomics identification</keyword>
<keyword id="KW-0675">Receptor</keyword>
<keyword id="KW-1185">Reference proteome</keyword>
<keyword id="KW-0677">Repeat</keyword>
<keyword id="KW-0964">Secreted</keyword>
<keyword id="KW-0732">Signal</keyword>
<keyword id="KW-0812">Transmembrane</keyword>
<keyword id="KW-1133">Transmembrane helix</keyword>
<sequence>MATEGAAQLGNRVAGMVCSLWVLLLVSSVLALEEVLLDTTGETSEIGWLTYPPGGWDEVSVLDDQRRLTRTFEACHVAGAPPGTGQDNWLQTHFVERRGAQRAHIRLHFSVRACSSLGVSGGTCRETFTLYYRQAEEPDSPDSVSSWHLKRWTKVDTIAADESFPSSSSSSSSSSSAAWAVGPHGAGQRAGLQLNVKERSFGPLTQRGFYVAFQDTGACLALVAVRLFSYTCPAVLRSFASFPETQASGAGGASLVAAVGTCVAHAEPEEDGVGGQAGGSPPRLHCNGEGKWMVAVGGCRCQPGYQPARGDKACQACPRGLYKSSAGNAPCSPCPARSHAPNPAAPVCPCLEGFYRASSDPPEAPCTGPPSAPQELWFEVQGSALMLHWRLPRELGGRGDLLFNVVCKECEGRQEPASGGGGTCHRCRDEVHFDPRQRGLTESRVLVGGLRAHVPYILEVQAVNGVSELSPDPPQAAAINVSTSHEVPSAVPVVHQVSRASNSITVSWPQPDQTNGNILDYQLRYYDQAEDESHSFTLTSETNTATVTQLSPGHIYGFQVRARTAAGHGPYGGKVYFQTLPQGELSSQLPERLSLVIGSILGALAFLLLAAITVLAVVFQRKRRGTGYTEQLQQYSSPGLGVKYYIDPSTYEDPCQAIRELAREVDPAYIKIEEVIGTGSFGEVRQGRLQPRGRREQTVAIQALWAGGAESLQMTFLGRAAVLGQFQHPNILRLEGVVTKSRPLMVLTEFMELGPLDSFLRQREGQFSSLQLVAMQRGVAAAMQYLSSFAFVHRSLSAHSVLVNSHLVCKVARLGHSPQGPSCLLRWAAPEVIAHGKHTTSSDVWSFGILMWEVMSYGERPYWDMSEQEVLNAIEQEFRLPPPPGCPPGLHLLMLDTWQKDRARRPHFDQLVAAFDKMIRKPDTLQAGGDPGERPSQALLTPVALDFPCLDSPQAWLSAIGLECYQDNFSKFGLCTFSDVAQLSLEDLPALGITLAGHQKKLLHHIQLLQQHLRQQGSVEV</sequence>
<comment type="function">
    <text evidence="8 10">Kinase-defective receptor for members of the ephrin-B family. Binds to ephrin-B1 and ephrin-B2. Modulates cell adhesion and migration by exerting both positive and negative effects upon stimulation with ephrin-B2. Inhibits JNK activation, T-cell receptor-induced IL-2 secretion and CD25 expression upon stimulation with ephrin-B2.</text>
</comment>
<comment type="subunit">
    <text evidence="7 10">Interacts with CBL and EPHB1. Interacts with FYN; this interaction takes place in a ligand-independent manner.</text>
</comment>
<comment type="interaction">
    <interactant intactId="EBI-714076">
        <id>O15197</id>
    </interactant>
    <interactant intactId="EBI-352572">
        <id>P08238</id>
        <label>HSP90AB1</label>
    </interactant>
    <organismsDiffer>false</organismsDiffer>
    <experiments>3</experiments>
</comment>
<comment type="interaction">
    <interactant intactId="EBI-10182490">
        <id>O15197-2</id>
    </interactant>
    <interactant intactId="EBI-712648">
        <id>O95994</id>
        <label>AGR2</label>
    </interactant>
    <organismsDiffer>false</organismsDiffer>
    <experiments>3</experiments>
</comment>
<comment type="interaction">
    <interactant intactId="EBI-10182490">
        <id>O15197-2</id>
    </interactant>
    <interactant intactId="EBI-18394052">
        <id>Q8WXK4-2</id>
        <label>ASB12</label>
    </interactant>
    <organismsDiffer>false</organismsDiffer>
    <experiments>3</experiments>
</comment>
<comment type="interaction">
    <interactant intactId="EBI-10182490">
        <id>O15197-2</id>
    </interactant>
    <interactant intactId="EBI-2548012">
        <id>Q9H2G9</id>
        <label>BLZF1</label>
    </interactant>
    <organismsDiffer>false</organismsDiffer>
    <experiments>3</experiments>
</comment>
<comment type="interaction">
    <interactant intactId="EBI-10182490">
        <id>O15197-2</id>
    </interactant>
    <interactant intactId="EBI-742054">
        <id>Q96D03</id>
        <label>DDIT4L</label>
    </interactant>
    <organismsDiffer>false</organismsDiffer>
    <experiments>3</experiments>
</comment>
<comment type="interaction">
    <interactant intactId="EBI-10182490">
        <id>O15197-2</id>
    </interactant>
    <interactant intactId="EBI-747204">
        <id>Q9UKT9</id>
        <label>IKZF3</label>
    </interactant>
    <organismsDiffer>false</organismsDiffer>
    <experiments>3</experiments>
</comment>
<comment type="interaction">
    <interactant intactId="EBI-10182490">
        <id>O15197-2</id>
    </interactant>
    <interactant intactId="EBI-6509505">
        <id>Q0VD86</id>
        <label>INCA1</label>
    </interactant>
    <organismsDiffer>false</organismsDiffer>
    <experiments>8</experiments>
</comment>
<comment type="interaction">
    <interactant intactId="EBI-10182490">
        <id>O15197-2</id>
    </interactant>
    <interactant intactId="EBI-6447480">
        <id>P35548</id>
        <label>MSX2</label>
    </interactant>
    <organismsDiffer>false</organismsDiffer>
    <experiments>3</experiments>
</comment>
<comment type="interaction">
    <interactant intactId="EBI-10182490">
        <id>O15197-2</id>
    </interactant>
    <interactant intactId="EBI-11903927">
        <id>Q5VT66</id>
        <label>MTARC1</label>
    </interactant>
    <organismsDiffer>false</organismsDiffer>
    <experiments>3</experiments>
</comment>
<comment type="interaction">
    <interactant intactId="EBI-10182490">
        <id>O15197-2</id>
    </interactant>
    <interactant intactId="EBI-740897">
        <id>Q9GZT8</id>
        <label>NIF3L1</label>
    </interactant>
    <organismsDiffer>false</organismsDiffer>
    <experiments>3</experiments>
</comment>
<comment type="interaction">
    <interactant intactId="EBI-10182490">
        <id>O15197-2</id>
    </interactant>
    <interactant intactId="EBI-945833">
        <id>Q7Z3S9</id>
        <label>NOTCH2NLA</label>
    </interactant>
    <organismsDiffer>false</organismsDiffer>
    <experiments>3</experiments>
</comment>
<comment type="interaction">
    <interactant intactId="EBI-10182490">
        <id>O15197-2</id>
    </interactant>
    <interactant intactId="EBI-12029004">
        <id>P78424</id>
        <label>POU6F2</label>
    </interactant>
    <organismsDiffer>false</organismsDiffer>
    <experiments>3</experiments>
</comment>
<comment type="interaction">
    <interactant intactId="EBI-10182490">
        <id>O15197-2</id>
    </interactant>
    <interactant intactId="EBI-351098">
        <id>O14744</id>
        <label>PRMT5</label>
    </interactant>
    <organismsDiffer>false</organismsDiffer>
    <experiments>3</experiments>
</comment>
<comment type="interaction">
    <interactant intactId="EBI-10182490">
        <id>O15197-2</id>
    </interactant>
    <interactant intactId="EBI-307352">
        <id>Q04864</id>
        <label>REL</label>
    </interactant>
    <organismsDiffer>false</organismsDiffer>
    <experiments>3</experiments>
</comment>
<comment type="interaction">
    <interactant intactId="EBI-10182490">
        <id>O15197-2</id>
    </interactant>
    <interactant intactId="EBI-10829018">
        <id>Q04864-2</id>
        <label>REL</label>
    </interactant>
    <organismsDiffer>false</organismsDiffer>
    <experiments>3</experiments>
</comment>
<comment type="interaction">
    <interactant intactId="EBI-10182490">
        <id>O15197-2</id>
    </interactant>
    <interactant intactId="EBI-11952764">
        <id>Q99081-3</id>
        <label>TCF12</label>
    </interactant>
    <organismsDiffer>false</organismsDiffer>
    <experiments>3</experiments>
</comment>
<comment type="interaction">
    <interactant intactId="EBI-10182490">
        <id>O15197-2</id>
    </interactant>
    <interactant intactId="EBI-533224">
        <id>P15884</id>
        <label>TCF4</label>
    </interactant>
    <organismsDiffer>false</organismsDiffer>
    <experiments>3</experiments>
</comment>
<comment type="interaction">
    <interactant intactId="EBI-10182490">
        <id>O15197-2</id>
    </interactant>
    <interactant intactId="EBI-13636688">
        <id>P15884-3</id>
        <label>TCF4</label>
    </interactant>
    <organismsDiffer>false</organismsDiffer>
    <experiments>3</experiments>
</comment>
<comment type="interaction">
    <interactant intactId="EBI-10182490">
        <id>O15197-2</id>
    </interactant>
    <interactant intactId="EBI-10239812">
        <id>Q96M29</id>
        <label>TEKT5</label>
    </interactant>
    <organismsDiffer>false</organismsDiffer>
    <experiments>3</experiments>
</comment>
<comment type="interaction">
    <interactant intactId="EBI-10182490">
        <id>O15197-2</id>
    </interactant>
    <interactant intactId="EBI-492476">
        <id>Q96RU7</id>
        <label>TRIB3</label>
    </interactant>
    <organismsDiffer>false</organismsDiffer>
    <experiments>3</experiments>
</comment>
<comment type="interaction">
    <interactant intactId="EBI-10182490">
        <id>O15197-2</id>
    </interactant>
    <interactant intactId="EBI-739510">
        <id>Q9HCM9</id>
        <label>TRIM39</label>
    </interactant>
    <organismsDiffer>false</organismsDiffer>
    <experiments>3</experiments>
</comment>
<comment type="interaction">
    <interactant intactId="EBI-10182490">
        <id>O15197-2</id>
    </interactant>
    <interactant intactId="EBI-11523450">
        <id>Q9HCM9-2</id>
        <label>TRIM39</label>
    </interactant>
    <organismsDiffer>false</organismsDiffer>
    <experiments>5</experiments>
</comment>
<comment type="subcellular location">
    <subcellularLocation>
        <location>Membrane</location>
        <topology>Single-pass type I membrane protein</topology>
    </subcellularLocation>
</comment>
<comment type="subcellular location">
    <molecule>Isoform 3</molecule>
    <subcellularLocation>
        <location evidence="19">Secreted</location>
    </subcellularLocation>
</comment>
<comment type="alternative products">
    <event type="alternative splicing"/>
    <isoform>
        <id>O15197-1</id>
        <name>1</name>
        <sequence type="displayed"/>
    </isoform>
    <isoform>
        <id>O15197-2</id>
        <name>2</name>
        <sequence type="described" ref="VSP_037496"/>
    </isoform>
    <isoform>
        <id>O15197-3</id>
        <name>3</name>
        <name>EphB6v</name>
        <sequence type="described" ref="VSP_037497 VSP_037498"/>
    </isoform>
</comment>
<comment type="tissue specificity">
    <text evidence="13 14 15">Expressed in brain. Expressed in non invasive breast carcinoma cell lines (at protein level). Strong expression in brain and pancreas, and weak expression in other tissues, such as heart, placenta, lung, liver, skeletal muscle and kidney. Expressed in breast non invasive tumors but not in metastatic lesions. Isoform 3 is expressed in cell lines of glioblastomas, anaplastic astrocytomas, gliosarcomas and astrocytomas. Isoform 3 is not detected in normal tissues.</text>
</comment>
<comment type="domain">
    <text>The protein kinase domain is predicted to be catalytically inactive. Its extracellular domain is capable of promoting cell adhesion and migration in response to low concentrations of ephrin-B2, but its cytoplasmic domain is essential for cell repulsion and inhibition of migration induced by high concentrations of ephrin-B2.</text>
</comment>
<comment type="PTM">
    <text evidence="7 10">Ligand-binding increases phosphorylation on tyrosine residues. Phosphorylation on tyrosine residues is mediated by transphosphorylation by the catalytically active EPHB1 in a ligand-independent manner. Tyrosine phosphorylation of the receptor may act as a switch on the functional transition from cell adhesion/attraction to de-adhesion/repulsion.</text>
</comment>
<comment type="similarity">
    <text evidence="2">Belongs to the protein kinase superfamily. Tyr protein kinase family. Ephrin receptor subfamily.</text>
</comment>
<comment type="sequence caution" evidence="19">
    <conflict type="erroneous initiation">
        <sequence resource="EMBL-CDS" id="AAD03058"/>
    </conflict>
    <text>Truncated N-terminus.</text>
</comment>
<comment type="sequence caution" evidence="19">
    <conflict type="erroneous initiation">
        <sequence resource="EMBL-CDS" id="AAI10608"/>
    </conflict>
    <text>Truncated N-terminus.</text>
</comment>
<comment type="sequence caution" evidence="19">
    <conflict type="erroneous initiation">
        <sequence resource="EMBL-CDS" id="AAP20939"/>
    </conflict>
    <text>Truncated N-terminus.</text>
</comment>
<comment type="sequence caution" evidence="19">
    <conflict type="erroneous initiation">
        <sequence resource="EMBL-CDS" id="BAA21560"/>
    </conflict>
    <text>Truncated N-terminus.</text>
</comment>
<comment type="sequence caution" evidence="19">
    <conflict type="erroneous gene model prediction">
        <sequence resource="EMBL-CDS" id="EAL23775"/>
    </conflict>
</comment>
<comment type="sequence caution" evidence="19">
    <conflict type="erroneous gene model prediction">
        <sequence resource="EMBL-CDS" id="EAW51902"/>
    </conflict>
</comment>
<comment type="online information" name="Atlas of Genetics and Cytogenetics in Oncology and Haematology">
    <link uri="https://atlasgeneticsoncology.org/gene/40471/EPHB6"/>
</comment>
<gene>
    <name type="primary">EPHB6</name>
</gene>
<feature type="signal peptide" evidence="9">
    <location>
        <begin position="1"/>
        <end position="31"/>
    </location>
</feature>
<feature type="chain" id="PRO_0000016837" description="Ephrin type-B receptor 6">
    <location>
        <begin position="32"/>
        <end position="1021"/>
    </location>
</feature>
<feature type="topological domain" description="Extracellular" evidence="1">
    <location>
        <begin position="32"/>
        <end position="594"/>
    </location>
</feature>
<feature type="transmembrane region" description="Helical" evidence="1">
    <location>
        <begin position="595"/>
        <end position="615"/>
    </location>
</feature>
<feature type="topological domain" description="Cytoplasmic" evidence="1">
    <location>
        <begin position="616"/>
        <end position="1021"/>
    </location>
</feature>
<feature type="domain" description="Eph LBD" evidence="5">
    <location>
        <begin position="33"/>
        <end position="237"/>
    </location>
</feature>
<feature type="domain" description="Fibronectin type-III 1" evidence="4">
    <location>
        <begin position="369"/>
        <end position="486"/>
    </location>
</feature>
<feature type="domain" description="Fibronectin type-III 2" evidence="4">
    <location>
        <begin position="487"/>
        <end position="582"/>
    </location>
</feature>
<feature type="domain" description="Protein kinase" evidence="2">
    <location>
        <begin position="670"/>
        <end position="919"/>
    </location>
</feature>
<feature type="domain" description="SAM" evidence="3">
    <location>
        <begin position="948"/>
        <end position="1012"/>
    </location>
</feature>
<feature type="region of interest" description="Disordered" evidence="6">
    <location>
        <begin position="163"/>
        <end position="182"/>
    </location>
</feature>
<feature type="short sequence motif" description="PDZ-binding" evidence="1">
    <location>
        <begin position="1019"/>
        <end position="1021"/>
    </location>
</feature>
<feature type="compositionally biased region" description="Low complexity" evidence="6">
    <location>
        <begin position="166"/>
        <end position="176"/>
    </location>
</feature>
<feature type="binding site" evidence="2">
    <location>
        <begin position="676"/>
        <end position="684"/>
    </location>
    <ligand>
        <name>ATP</name>
        <dbReference type="ChEBI" id="CHEBI:30616"/>
    </ligand>
</feature>
<feature type="glycosylation site" description="N-linked (GlcNAc...) asparagine" evidence="1">
    <location>
        <position position="480"/>
    </location>
</feature>
<feature type="splice variant" id="VSP_037496" description="In isoform 2." evidence="17">
    <location>
        <begin position="16"/>
        <end position="292"/>
    </location>
</feature>
<feature type="splice variant" id="VSP_037497" description="In isoform 3." evidence="18">
    <original>VPSAVPVVHQVSRASNSITVSWPQPDQTNGNILDYQLRYYDQAEDESHSFTLTS</original>
    <variation>GELFSLAFRIPCLRSFEPPSLLLISSLVHPCRPPLKADPAPRDSYPHNNFPFAL</variation>
    <location>
        <begin position="487"/>
        <end position="540"/>
    </location>
</feature>
<feature type="splice variant" id="VSP_037498" description="In isoform 3." evidence="18">
    <location>
        <begin position="541"/>
        <end position="1021"/>
    </location>
</feature>
<feature type="sequence variant" id="VAR_019139" description="In dbSNP:rs8177173." evidence="12 16">
    <original>G</original>
    <variation>S</variation>
    <location>
        <position position="122"/>
    </location>
</feature>
<feature type="sequence variant" id="VAR_042190" evidence="12">
    <original>S</original>
    <variation>T</variation>
    <location>
        <position position="170"/>
    </location>
</feature>
<feature type="sequence variant" id="VAR_042191" evidence="12">
    <original>A</original>
    <variation>V</variation>
    <location>
        <position position="221"/>
    </location>
</feature>
<feature type="sequence variant" id="VAR_042192" evidence="12">
    <original>P</original>
    <variation>H</variation>
    <location>
        <position position="282"/>
    </location>
</feature>
<feature type="sequence variant" id="VAR_019140" description="In dbSNP:rs8177143." evidence="16">
    <original>P</original>
    <variation>R</variation>
    <location>
        <position position="282"/>
    </location>
</feature>
<feature type="sequence variant" id="VAR_042193" description="In dbSNP:rs55728646." evidence="12">
    <original>R</original>
    <variation>Q</variation>
    <location>
        <position position="309"/>
    </location>
</feature>
<feature type="sequence variant" id="VAR_019141" description="In dbSNP:rs8177146." evidence="12 16">
    <original>S</original>
    <variation>A</variation>
    <location>
        <position position="324"/>
    </location>
</feature>
<feature type="sequence variant" id="VAR_042194" description="In dbSNP:rs35189999." evidence="12">
    <original>S</original>
    <variation>L</variation>
    <location>
        <position position="332"/>
    </location>
</feature>
<feature type="sequence variant" id="VAR_036091" description="In a colorectal cancer sample; somatic mutation." evidence="11">
    <original>D</original>
    <variation>N</variation>
    <location>
        <position position="360"/>
    </location>
</feature>
<feature type="sequence variant" id="VAR_019142" description="In dbSNP:rs8177175." evidence="16">
    <original>R</original>
    <variation>Q</variation>
    <location>
        <position position="499"/>
    </location>
</feature>
<feature type="sequence variant" id="VAR_036092" description="In a colorectal cancer sample; somatic mutation." evidence="11">
    <original>A</original>
    <variation>P</variation>
    <location>
        <position position="603"/>
    </location>
</feature>
<feature type="sequence variant" id="VAR_042195" description="In dbSNP:rs35984674." evidence="12">
    <original>A</original>
    <variation>V</variation>
    <location>
        <position position="662"/>
    </location>
</feature>
<feature type="sequence variant" id="VAR_036093" description="In a colorectal cancer sample; somatic mutation." evidence="11">
    <original>R</original>
    <variation>Q</variation>
    <location>
        <position position="719"/>
    </location>
</feature>
<feature type="sequence variant" id="VAR_042196" description="In an ovarian mucinous carcinoma sample; somatic mutation." evidence="12">
    <original>P</original>
    <variation>S</variation>
    <location>
        <position position="743"/>
    </location>
</feature>
<feature type="sequence variant" id="VAR_042197" evidence="12">
    <original>R</original>
    <variation>H</variation>
    <location>
        <position position="813"/>
    </location>
</feature>
<feature type="sequence variant" id="VAR_042198" description="In a glioblastoma multiforme sample; somatic mutation." evidence="12">
    <original>E</original>
    <variation>K</variation>
    <location>
        <position position="875"/>
    </location>
</feature>
<feature type="sequence variant" id="VAR_036094" description="In a colorectal cancer sample; somatic mutation." evidence="11">
    <original>D</original>
    <variation>G</variation>
    <location>
        <position position="930"/>
    </location>
</feature>
<feature type="sequence variant" id="VAR_042199" evidence="12">
    <original>I</original>
    <variation>V</variation>
    <location>
        <position position="993"/>
    </location>
</feature>
<feature type="strand" evidence="20">
    <location>
        <begin position="34"/>
        <end position="42"/>
    </location>
</feature>
<feature type="strand" evidence="20">
    <location>
        <begin position="49"/>
        <end position="52"/>
    </location>
</feature>
<feature type="strand" evidence="20">
    <location>
        <begin position="55"/>
        <end position="62"/>
    </location>
</feature>
<feature type="strand" evidence="20">
    <location>
        <begin position="64"/>
        <end position="66"/>
    </location>
</feature>
<feature type="strand" evidence="20">
    <location>
        <begin position="68"/>
        <end position="74"/>
    </location>
</feature>
<feature type="helix" evidence="20">
    <location>
        <begin position="76"/>
        <end position="78"/>
    </location>
</feature>
<feature type="strand" evidence="20">
    <location>
        <begin position="88"/>
        <end position="91"/>
    </location>
</feature>
<feature type="strand" evidence="20">
    <location>
        <begin position="101"/>
        <end position="112"/>
    </location>
</feature>
<feature type="helix" evidence="20">
    <location>
        <begin position="114"/>
        <end position="116"/>
    </location>
</feature>
<feature type="strand" evidence="20">
    <location>
        <begin position="117"/>
        <end position="119"/>
    </location>
</feature>
<feature type="turn" evidence="20">
    <location>
        <begin position="121"/>
        <end position="123"/>
    </location>
</feature>
<feature type="strand" evidence="20">
    <location>
        <begin position="126"/>
        <end position="139"/>
    </location>
</feature>
<feature type="turn" evidence="20">
    <location>
        <begin position="141"/>
        <end position="144"/>
    </location>
</feature>
<feature type="strand" evidence="20">
    <location>
        <begin position="148"/>
        <end position="150"/>
    </location>
</feature>
<feature type="strand" evidence="20">
    <location>
        <begin position="153"/>
        <end position="159"/>
    </location>
</feature>
<feature type="strand" evidence="20">
    <location>
        <begin position="190"/>
        <end position="192"/>
    </location>
</feature>
<feature type="strand" evidence="20">
    <location>
        <begin position="195"/>
        <end position="202"/>
    </location>
</feature>
<feature type="strand" evidence="20">
    <location>
        <begin position="206"/>
        <end position="217"/>
    </location>
</feature>
<feature type="strand" evidence="20">
    <location>
        <begin position="219"/>
        <end position="229"/>
    </location>
</feature>
<feature type="strand" evidence="20">
    <location>
        <begin position="235"/>
        <end position="237"/>
    </location>
</feature>
<feature type="strand" evidence="20">
    <location>
        <begin position="240"/>
        <end position="242"/>
    </location>
</feature>
<feature type="strand" evidence="20">
    <location>
        <begin position="256"/>
        <end position="259"/>
    </location>
</feature>
<feature type="strand" evidence="20">
    <location>
        <begin position="283"/>
        <end position="286"/>
    </location>
</feature>
<feature type="strand" evidence="20">
    <location>
        <begin position="292"/>
        <end position="296"/>
    </location>
</feature>
<feature type="strand" evidence="20">
    <location>
        <begin position="305"/>
        <end position="308"/>
    </location>
</feature>
<feature type="turn" evidence="20">
    <location>
        <begin position="309"/>
        <end position="312"/>
    </location>
</feature>
<feature type="strand" evidence="20">
    <location>
        <begin position="313"/>
        <end position="316"/>
    </location>
</feature>
<feature type="strand" evidence="20">
    <location>
        <begin position="325"/>
        <end position="328"/>
    </location>
</feature>
<feature type="strand" evidence="20">
    <location>
        <begin position="342"/>
        <end position="344"/>
    </location>
</feature>
<feature type="strand" evidence="20">
    <location>
        <begin position="374"/>
        <end position="380"/>
    </location>
</feature>
<feature type="strand" evidence="20">
    <location>
        <begin position="382"/>
        <end position="390"/>
    </location>
</feature>
<feature type="strand" evidence="20">
    <location>
        <begin position="402"/>
        <end position="409"/>
    </location>
</feature>
<feature type="strand" evidence="20">
    <location>
        <begin position="414"/>
        <end position="416"/>
    </location>
</feature>
<feature type="turn" evidence="20">
    <location>
        <begin position="418"/>
        <end position="420"/>
    </location>
</feature>
<feature type="strand" evidence="20">
    <location>
        <begin position="437"/>
        <end position="447"/>
    </location>
</feature>
<feature type="strand" evidence="20">
    <location>
        <begin position="456"/>
        <end position="463"/>
    </location>
</feature>
<feature type="strand" evidence="20">
    <location>
        <begin position="465"/>
        <end position="469"/>
    </location>
</feature>
<feature type="strand" evidence="20">
    <location>
        <begin position="476"/>
        <end position="481"/>
    </location>
</feature>
<name>EPHB6_HUMAN</name>
<proteinExistence type="evidence at protein level"/>
<evidence type="ECO:0000255" key="1"/>
<evidence type="ECO:0000255" key="2">
    <source>
        <dbReference type="PROSITE-ProRule" id="PRU00159"/>
    </source>
</evidence>
<evidence type="ECO:0000255" key="3">
    <source>
        <dbReference type="PROSITE-ProRule" id="PRU00184"/>
    </source>
</evidence>
<evidence type="ECO:0000255" key="4">
    <source>
        <dbReference type="PROSITE-ProRule" id="PRU00316"/>
    </source>
</evidence>
<evidence type="ECO:0000255" key="5">
    <source>
        <dbReference type="PROSITE-ProRule" id="PRU00883"/>
    </source>
</evidence>
<evidence type="ECO:0000256" key="6">
    <source>
        <dbReference type="SAM" id="MobiDB-lite"/>
    </source>
</evidence>
<evidence type="ECO:0000269" key="7">
    <source>
    </source>
</evidence>
<evidence type="ECO:0000269" key="8">
    <source>
    </source>
</evidence>
<evidence type="ECO:0000269" key="9">
    <source>
    </source>
</evidence>
<evidence type="ECO:0000269" key="10">
    <source>
    </source>
</evidence>
<evidence type="ECO:0000269" key="11">
    <source>
    </source>
</evidence>
<evidence type="ECO:0000269" key="12">
    <source>
    </source>
</evidence>
<evidence type="ECO:0000269" key="13">
    <source>
    </source>
</evidence>
<evidence type="ECO:0000269" key="14">
    <source>
    </source>
</evidence>
<evidence type="ECO:0000269" key="15">
    <source>
    </source>
</evidence>
<evidence type="ECO:0000269" key="16">
    <source ref="2"/>
</evidence>
<evidence type="ECO:0000303" key="17">
    <source>
    </source>
</evidence>
<evidence type="ECO:0000303" key="18">
    <source>
    </source>
</evidence>
<evidence type="ECO:0000305" key="19"/>
<evidence type="ECO:0007829" key="20">
    <source>
        <dbReference type="PDB" id="7K7J"/>
    </source>
</evidence>
<reference key="1">
    <citation type="journal article" date="1997" name="Biochem. Biophys. Res. Commun.">
        <title>Expression of a kinase-defective Eph-like receptor in the normal human brain.</title>
        <authorList>
            <person name="Matsuoka H."/>
            <person name="Iwata N."/>
            <person name="Ito M."/>
            <person name="Shimoyama M."/>
            <person name="Nagata A."/>
            <person name="Chihara K."/>
            <person name="Takai S."/>
            <person name="Matsui T."/>
        </authorList>
    </citation>
    <scope>NUCLEOTIDE SEQUENCE [MRNA] (ISOFORM 1)</scope>
    <scope>TISSUE SPECIFICITY</scope>
</reference>
<reference key="2">
    <citation type="submission" date="2003-04" db="EMBL/GenBank/DDBJ databases">
        <authorList>
            <consortium name="SeattleSNPs variation discovery resource"/>
        </authorList>
    </citation>
    <scope>NUCLEOTIDE SEQUENCE [GENOMIC DNA]</scope>
    <scope>VARIANTS SER-122; ARG-282; ALA-324 AND GLN-499</scope>
</reference>
<reference key="3">
    <citation type="journal article" date="2003" name="Nature">
        <title>The DNA sequence of human chromosome 7.</title>
        <authorList>
            <person name="Hillier L.W."/>
            <person name="Fulton R.S."/>
            <person name="Fulton L.A."/>
            <person name="Graves T.A."/>
            <person name="Pepin K.H."/>
            <person name="Wagner-McPherson C."/>
            <person name="Layman D."/>
            <person name="Maas J."/>
            <person name="Jaeger S."/>
            <person name="Walker R."/>
            <person name="Wylie K."/>
            <person name="Sekhon M."/>
            <person name="Becker M.C."/>
            <person name="O'Laughlin M.D."/>
            <person name="Schaller M.E."/>
            <person name="Fewell G.A."/>
            <person name="Delehaunty K.D."/>
            <person name="Miner T.L."/>
            <person name="Nash W.E."/>
            <person name="Cordes M."/>
            <person name="Du H."/>
            <person name="Sun H."/>
            <person name="Edwards J."/>
            <person name="Bradshaw-Cordum H."/>
            <person name="Ali J."/>
            <person name="Andrews S."/>
            <person name="Isak A."/>
            <person name="Vanbrunt A."/>
            <person name="Nguyen C."/>
            <person name="Du F."/>
            <person name="Lamar B."/>
            <person name="Courtney L."/>
            <person name="Kalicki J."/>
            <person name="Ozersky P."/>
            <person name="Bielicki L."/>
            <person name="Scott K."/>
            <person name="Holmes A."/>
            <person name="Harkins R."/>
            <person name="Harris A."/>
            <person name="Strong C.M."/>
            <person name="Hou S."/>
            <person name="Tomlinson C."/>
            <person name="Dauphin-Kohlberg S."/>
            <person name="Kozlowicz-Reilly A."/>
            <person name="Leonard S."/>
            <person name="Rohlfing T."/>
            <person name="Rock S.M."/>
            <person name="Tin-Wollam A.-M."/>
            <person name="Abbott A."/>
            <person name="Minx P."/>
            <person name="Maupin R."/>
            <person name="Strowmatt C."/>
            <person name="Latreille P."/>
            <person name="Miller N."/>
            <person name="Johnson D."/>
            <person name="Murray J."/>
            <person name="Woessner J.P."/>
            <person name="Wendl M.C."/>
            <person name="Yang S.-P."/>
            <person name="Schultz B.R."/>
            <person name="Wallis J.W."/>
            <person name="Spieth J."/>
            <person name="Bieri T.A."/>
            <person name="Nelson J.O."/>
            <person name="Berkowicz N."/>
            <person name="Wohldmann P.E."/>
            <person name="Cook L.L."/>
            <person name="Hickenbotham M.T."/>
            <person name="Eldred J."/>
            <person name="Williams D."/>
            <person name="Bedell J.A."/>
            <person name="Mardis E.R."/>
            <person name="Clifton S.W."/>
            <person name="Chissoe S.L."/>
            <person name="Marra M.A."/>
            <person name="Raymond C."/>
            <person name="Haugen E."/>
            <person name="Gillett W."/>
            <person name="Zhou Y."/>
            <person name="James R."/>
            <person name="Phelps K."/>
            <person name="Iadanoto S."/>
            <person name="Bubb K."/>
            <person name="Simms E."/>
            <person name="Levy R."/>
            <person name="Clendenning J."/>
            <person name="Kaul R."/>
            <person name="Kent W.J."/>
            <person name="Furey T.S."/>
            <person name="Baertsch R.A."/>
            <person name="Brent M.R."/>
            <person name="Keibler E."/>
            <person name="Flicek P."/>
            <person name="Bork P."/>
            <person name="Suyama M."/>
            <person name="Bailey J.A."/>
            <person name="Portnoy M.E."/>
            <person name="Torrents D."/>
            <person name="Chinwalla A.T."/>
            <person name="Gish W.R."/>
            <person name="Eddy S.R."/>
            <person name="McPherson J.D."/>
            <person name="Olson M.V."/>
            <person name="Eichler E.E."/>
            <person name="Green E.D."/>
            <person name="Waterston R.H."/>
            <person name="Wilson R.K."/>
        </authorList>
    </citation>
    <scope>NUCLEOTIDE SEQUENCE [LARGE SCALE GENOMIC DNA]</scope>
</reference>
<reference key="4">
    <citation type="journal article" date="2003" name="Science">
        <title>Human chromosome 7: DNA sequence and biology.</title>
        <authorList>
            <person name="Scherer S.W."/>
            <person name="Cheung J."/>
            <person name="MacDonald J.R."/>
            <person name="Osborne L.R."/>
            <person name="Nakabayashi K."/>
            <person name="Herbrick J.-A."/>
            <person name="Carson A.R."/>
            <person name="Parker-Katiraee L."/>
            <person name="Skaug J."/>
            <person name="Khaja R."/>
            <person name="Zhang J."/>
            <person name="Hudek A.K."/>
            <person name="Li M."/>
            <person name="Haddad M."/>
            <person name="Duggan G.E."/>
            <person name="Fernandez B.A."/>
            <person name="Kanematsu E."/>
            <person name="Gentles S."/>
            <person name="Christopoulos C.C."/>
            <person name="Choufani S."/>
            <person name="Kwasnicka D."/>
            <person name="Zheng X.H."/>
            <person name="Lai Z."/>
            <person name="Nusskern D.R."/>
            <person name="Zhang Q."/>
            <person name="Gu Z."/>
            <person name="Lu F."/>
            <person name="Zeesman S."/>
            <person name="Nowaczyk M.J."/>
            <person name="Teshima I."/>
            <person name="Chitayat D."/>
            <person name="Shuman C."/>
            <person name="Weksberg R."/>
            <person name="Zackai E.H."/>
            <person name="Grebe T.A."/>
            <person name="Cox S.R."/>
            <person name="Kirkpatrick S.J."/>
            <person name="Rahman N."/>
            <person name="Friedman J.M."/>
            <person name="Heng H.H.Q."/>
            <person name="Pelicci P.G."/>
            <person name="Lo-Coco F."/>
            <person name="Belloni E."/>
            <person name="Shaffer L.G."/>
            <person name="Pober B."/>
            <person name="Morton C.C."/>
            <person name="Gusella J.F."/>
            <person name="Bruns G.A.P."/>
            <person name="Korf B.R."/>
            <person name="Quade B.J."/>
            <person name="Ligon A.H."/>
            <person name="Ferguson H."/>
            <person name="Higgins A.W."/>
            <person name="Leach N.T."/>
            <person name="Herrick S.R."/>
            <person name="Lemyre E."/>
            <person name="Farra C.G."/>
            <person name="Kim H.-G."/>
            <person name="Summers A.M."/>
            <person name="Gripp K.W."/>
            <person name="Roberts W."/>
            <person name="Szatmari P."/>
            <person name="Winsor E.J.T."/>
            <person name="Grzeschik K.-H."/>
            <person name="Teebi A."/>
            <person name="Minassian B.A."/>
            <person name="Kere J."/>
            <person name="Armengol L."/>
            <person name="Pujana M.A."/>
            <person name="Estivill X."/>
            <person name="Wilson M.D."/>
            <person name="Koop B.F."/>
            <person name="Tosi S."/>
            <person name="Moore G.E."/>
            <person name="Boright A.P."/>
            <person name="Zlotorynski E."/>
            <person name="Kerem B."/>
            <person name="Kroisel P.M."/>
            <person name="Petek E."/>
            <person name="Oscier D.G."/>
            <person name="Mould S.J."/>
            <person name="Doehner H."/>
            <person name="Doehner K."/>
            <person name="Rommens J.M."/>
            <person name="Vincent J.B."/>
            <person name="Venter J.C."/>
            <person name="Li P.W."/>
            <person name="Mural R.J."/>
            <person name="Adams M.D."/>
            <person name="Tsui L.-C."/>
        </authorList>
    </citation>
    <scope>NUCLEOTIDE SEQUENCE [LARGE SCALE GENOMIC DNA]</scope>
</reference>
<reference key="5">
    <citation type="submission" date="2005-09" db="EMBL/GenBank/DDBJ databases">
        <authorList>
            <person name="Mural R.J."/>
            <person name="Istrail S."/>
            <person name="Sutton G.G."/>
            <person name="Florea L."/>
            <person name="Halpern A.L."/>
            <person name="Mobarry C.M."/>
            <person name="Lippert R."/>
            <person name="Walenz B."/>
            <person name="Shatkay H."/>
            <person name="Dew I."/>
            <person name="Miller J.R."/>
            <person name="Flanigan M.J."/>
            <person name="Edwards N.J."/>
            <person name="Bolanos R."/>
            <person name="Fasulo D."/>
            <person name="Halldorsson B.V."/>
            <person name="Hannenhalli S."/>
            <person name="Turner R."/>
            <person name="Yooseph S."/>
            <person name="Lu F."/>
            <person name="Nusskern D.R."/>
            <person name="Shue B.C."/>
            <person name="Zheng X.H."/>
            <person name="Zhong F."/>
            <person name="Delcher A.L."/>
            <person name="Huson D.H."/>
            <person name="Kravitz S.A."/>
            <person name="Mouchard L."/>
            <person name="Reinert K."/>
            <person name="Remington K.A."/>
            <person name="Clark A.G."/>
            <person name="Waterman M.S."/>
            <person name="Eichler E.E."/>
            <person name="Adams M.D."/>
            <person name="Hunkapiller M.W."/>
            <person name="Myers E.W."/>
            <person name="Venter J.C."/>
        </authorList>
    </citation>
    <scope>NUCLEOTIDE SEQUENCE [LARGE SCALE GENOMIC DNA]</scope>
</reference>
<reference key="6">
    <citation type="journal article" date="2004" name="Genome Res.">
        <title>The status, quality, and expansion of the NIH full-length cDNA project: the Mammalian Gene Collection (MGC).</title>
        <authorList>
            <consortium name="The MGC Project Team"/>
        </authorList>
    </citation>
    <scope>NUCLEOTIDE SEQUENCE [LARGE SCALE MRNA] (ISOFORMS 1 AND 2)</scope>
    <source>
        <tissue>Brain</tissue>
    </source>
</reference>
<reference key="7">
    <citation type="journal article" date="2008" name="Oncol. Rep.">
        <title>Identification of EphB6 variant-derived epitope peptides recognized by cytotoxic T-lymphocytes from HLA-A24+ malignant glioma patients.</title>
        <authorList>
            <person name="Jin M."/>
            <person name="Komohara Y."/>
            <person name="Shichijo S."/>
            <person name="Harada M."/>
            <person name="Yamanaka R."/>
            <person name="Miyamoto S."/>
            <person name="Nikawa J."/>
            <person name="Itoh K."/>
            <person name="Yamada A."/>
        </authorList>
    </citation>
    <scope>NUCLEOTIDE SEQUENCE [MRNA] OF 16-1021 (ISOFORM 3)</scope>
</reference>
<reference key="8">
    <citation type="journal article" date="2004" name="Protein Sci.">
        <title>Signal peptide prediction based on analysis of experimentally verified cleavage sites.</title>
        <authorList>
            <person name="Zhang Z."/>
            <person name="Henzel W.J."/>
        </authorList>
    </citation>
    <scope>PROTEIN SEQUENCE OF 32-46</scope>
</reference>
<reference key="9">
    <citation type="journal article" date="2002" name="J. Biol. Chem.">
        <title>The kinase-null EphB6 receptor undergoes transphosphorylation in a complex with EphB1.</title>
        <authorList>
            <person name="Freywald A."/>
            <person name="Sharfe N."/>
            <person name="Roifman C.M."/>
        </authorList>
    </citation>
    <scope>INTERACTION WITH CBL AND EPHB1</scope>
    <scope>PHOSPHORYLATION</scope>
</reference>
<reference key="10">
    <citation type="journal article" date="2003" name="J. Biol. Chem.">
        <title>The EphB6 receptor inhibits JNK activation in T lymphocytes and modulates T cell receptor-mediated responses.</title>
        <authorList>
            <person name="Freywald A."/>
            <person name="Sharfe N."/>
            <person name="Rashotte C."/>
            <person name="Grunberger T."/>
            <person name="Roifman C.M."/>
        </authorList>
    </citation>
    <scope>FUNCTION</scope>
</reference>
<reference key="11">
    <citation type="journal article" date="2005" name="J. Biol. Chem.">
        <title>Biphasic functions of the kinase-defective Ephb6 receptor in cell adhesion and migration.</title>
        <authorList>
            <person name="Matsuoka H."/>
            <person name="Obama H."/>
            <person name="Kelly M.L."/>
            <person name="Matsui T."/>
            <person name="Nakamoto M."/>
        </authorList>
    </citation>
    <scope>FUNCTION</scope>
    <scope>INTERACTION WITH FYN</scope>
    <scope>PHOSPHORYLATION</scope>
</reference>
<reference key="12">
    <citation type="journal article" date="2008" name="Cancer Sci.">
        <title>Erythropoietin-producing hepatocyte B6 variant-derived peptides with the ability to induce glioma-reactive cytotoxic T lymphocytes in human leukocyte antigen-A2+ glioma patients.</title>
        <authorList>
            <person name="Jin M."/>
            <person name="Komohara Y."/>
            <person name="Shichijo S."/>
            <person name="Yamanaka R."/>
            <person name="Nikawa J."/>
            <person name="Itoh K."/>
            <person name="Yamada A."/>
        </authorList>
    </citation>
    <scope>TISSUE SPECIFICITY</scope>
</reference>
<reference key="13">
    <citation type="journal article" date="2009" name="Oncogene">
        <title>EphB6 receptor significantly alters invasiveness and other phenotypic characteristics of human breast carcinoma cells.</title>
        <authorList>
            <person name="Fox B.P."/>
            <person name="Kandpal R.P."/>
        </authorList>
    </citation>
    <scope>TISSUE SPECIFICITY</scope>
</reference>
<reference key="14">
    <citation type="journal article" date="2006" name="Science">
        <title>The consensus coding sequences of human breast and colorectal cancers.</title>
        <authorList>
            <person name="Sjoeblom T."/>
            <person name="Jones S."/>
            <person name="Wood L.D."/>
            <person name="Parsons D.W."/>
            <person name="Lin J."/>
            <person name="Barber T.D."/>
            <person name="Mandelker D."/>
            <person name="Leary R.J."/>
            <person name="Ptak J."/>
            <person name="Silliman N."/>
            <person name="Szabo S."/>
            <person name="Buckhaults P."/>
            <person name="Farrell C."/>
            <person name="Meeh P."/>
            <person name="Markowitz S.D."/>
            <person name="Willis J."/>
            <person name="Dawson D."/>
            <person name="Willson J.K.V."/>
            <person name="Gazdar A.F."/>
            <person name="Hartigan J."/>
            <person name="Wu L."/>
            <person name="Liu C."/>
            <person name="Parmigiani G."/>
            <person name="Park B.H."/>
            <person name="Bachman K.E."/>
            <person name="Papadopoulos N."/>
            <person name="Vogelstein B."/>
            <person name="Kinzler K.W."/>
            <person name="Velculescu V.E."/>
        </authorList>
    </citation>
    <scope>VARIANTS [LARGE SCALE ANALYSIS] ASN-360; PRO-603; GLN-719 AND GLY-930</scope>
</reference>
<reference key="15">
    <citation type="journal article" date="2007" name="Nature">
        <title>Patterns of somatic mutation in human cancer genomes.</title>
        <authorList>
            <person name="Greenman C."/>
            <person name="Stephens P."/>
            <person name="Smith R."/>
            <person name="Dalgliesh G.L."/>
            <person name="Hunter C."/>
            <person name="Bignell G."/>
            <person name="Davies H."/>
            <person name="Teague J."/>
            <person name="Butler A."/>
            <person name="Stevens C."/>
            <person name="Edkins S."/>
            <person name="O'Meara S."/>
            <person name="Vastrik I."/>
            <person name="Schmidt E.E."/>
            <person name="Avis T."/>
            <person name="Barthorpe S."/>
            <person name="Bhamra G."/>
            <person name="Buck G."/>
            <person name="Choudhury B."/>
            <person name="Clements J."/>
            <person name="Cole J."/>
            <person name="Dicks E."/>
            <person name="Forbes S."/>
            <person name="Gray K."/>
            <person name="Halliday K."/>
            <person name="Harrison R."/>
            <person name="Hills K."/>
            <person name="Hinton J."/>
            <person name="Jenkinson A."/>
            <person name="Jones D."/>
            <person name="Menzies A."/>
            <person name="Mironenko T."/>
            <person name="Perry J."/>
            <person name="Raine K."/>
            <person name="Richardson D."/>
            <person name="Shepherd R."/>
            <person name="Small A."/>
            <person name="Tofts C."/>
            <person name="Varian J."/>
            <person name="Webb T."/>
            <person name="West S."/>
            <person name="Widaa S."/>
            <person name="Yates A."/>
            <person name="Cahill D.P."/>
            <person name="Louis D.N."/>
            <person name="Goldstraw P."/>
            <person name="Nicholson A.G."/>
            <person name="Brasseur F."/>
            <person name="Looijenga L."/>
            <person name="Weber B.L."/>
            <person name="Chiew Y.-E."/>
            <person name="DeFazio A."/>
            <person name="Greaves M.F."/>
            <person name="Green A.R."/>
            <person name="Campbell P."/>
            <person name="Birney E."/>
            <person name="Easton D.F."/>
            <person name="Chenevix-Trench G."/>
            <person name="Tan M.-H."/>
            <person name="Khoo S.K."/>
            <person name="Teh B.T."/>
            <person name="Yuen S.T."/>
            <person name="Leung S.Y."/>
            <person name="Wooster R."/>
            <person name="Futreal P.A."/>
            <person name="Stratton M.R."/>
        </authorList>
    </citation>
    <scope>VARIANTS [LARGE SCALE ANALYSIS] SER-122; THR-170; VAL-221; HIS-282; GLN-309; ALA-324; LEU-332; VAL-662; SER-743; HIS-813; LYS-875 AND VAL-993</scope>
</reference>
<organism>
    <name type="scientific">Homo sapiens</name>
    <name type="common">Human</name>
    <dbReference type="NCBI Taxonomy" id="9606"/>
    <lineage>
        <taxon>Eukaryota</taxon>
        <taxon>Metazoa</taxon>
        <taxon>Chordata</taxon>
        <taxon>Craniata</taxon>
        <taxon>Vertebrata</taxon>
        <taxon>Euteleostomi</taxon>
        <taxon>Mammalia</taxon>
        <taxon>Eutheria</taxon>
        <taxon>Euarchontoglires</taxon>
        <taxon>Primates</taxon>
        <taxon>Haplorrhini</taxon>
        <taxon>Catarrhini</taxon>
        <taxon>Hominidae</taxon>
        <taxon>Homo</taxon>
    </lineage>
</organism>
<protein>
    <recommendedName>
        <fullName>Ephrin type-B receptor 6</fullName>
    </recommendedName>
    <alternativeName>
        <fullName>HEP</fullName>
    </alternativeName>
    <alternativeName>
        <fullName>Tyrosine-protein kinase-defective receptor EPH-6</fullName>
    </alternativeName>
</protein>